<evidence type="ECO:0000250" key="1">
    <source>
        <dbReference type="UniProtKB" id="Q8N8R5"/>
    </source>
</evidence>
<evidence type="ECO:0000255" key="2"/>
<evidence type="ECO:0000305" key="3"/>
<sequence length="341" mass="37432">MLQVVQSPHNLVFMGSIRSVVACLSLAAVARKMTAATGQSVSGTSAAAAGLLRLTSVPGYDHNRVNDVLLLRPAAETQRRCDNETQNLQDGNDHVVFFPGDIQNFQQEMALQPDAAPWQCWSLERVGLTLAHRFPGCHIWVIRASQMYLHKFSCYQNFVESNLFGAPEHSADYGAIRHLRALLGHSMQQAGLPNPLPPLSGTSTPGPLPAGFSLTIVGFSKGCVVLNQIVYELAGARADPELQLFLDRVSALYWLDGGHPGGSETWVTDKCALGELASSGVAVHAHVTPYEVRDPMRAWVGREHRHFIKTLEDLGARVSHKLHFEDEPASIDNHFRVIQEF</sequence>
<reference key="1">
    <citation type="submission" date="2006-10" db="EMBL/GenBank/DDBJ databases">
        <authorList>
            <consortium name="NIH - Zebrafish Gene Collection (ZGC) project"/>
        </authorList>
    </citation>
    <scope>NUCLEOTIDE SEQUENCE [LARGE SCALE MRNA]</scope>
    <source>
        <tissue>Brain</tissue>
    </source>
</reference>
<name>CB069_DANRE</name>
<dbReference type="EMBL" id="BC125878">
    <property type="protein sequence ID" value="AAI25879.1"/>
    <property type="molecule type" value="mRNA"/>
</dbReference>
<dbReference type="RefSeq" id="NP_001071196.2">
    <property type="nucleotide sequence ID" value="NM_001077728.1"/>
</dbReference>
<dbReference type="FunCoup" id="A0JMH2">
    <property type="interactions" value="1092"/>
</dbReference>
<dbReference type="PaxDb" id="7955-ENSDARP00000115089"/>
<dbReference type="GeneID" id="777620"/>
<dbReference type="KEGG" id="dre:777620"/>
<dbReference type="AGR" id="ZFIN:ZDB-GENE-061103-379"/>
<dbReference type="ZFIN" id="ZDB-GENE-061103-379">
    <property type="gene designation" value="zgc:153521"/>
</dbReference>
<dbReference type="eggNOG" id="KOG2800">
    <property type="taxonomic scope" value="Eukaryota"/>
</dbReference>
<dbReference type="InParanoid" id="A0JMH2"/>
<dbReference type="OrthoDB" id="419333at2759"/>
<dbReference type="PhylomeDB" id="A0JMH2"/>
<dbReference type="PRO" id="PR:A0JMH2"/>
<dbReference type="Proteomes" id="UP000000437">
    <property type="component" value="Alternate scaffold 9"/>
</dbReference>
<dbReference type="Proteomes" id="UP000000437">
    <property type="component" value="Chromosome 9"/>
</dbReference>
<dbReference type="GO" id="GO:0005759">
    <property type="term" value="C:mitochondrial matrix"/>
    <property type="evidence" value="ECO:0007669"/>
    <property type="project" value="UniProtKB-SubCell"/>
</dbReference>
<dbReference type="GO" id="GO:0005739">
    <property type="term" value="C:mitochondrion"/>
    <property type="evidence" value="ECO:0000318"/>
    <property type="project" value="GO_Central"/>
</dbReference>
<dbReference type="InterPro" id="IPR018881">
    <property type="entry name" value="C2orf69_mit"/>
</dbReference>
<dbReference type="PANTHER" id="PTHR31296:SF1">
    <property type="entry name" value="MITOCHONDRIAL PROTEIN C2ORF69"/>
    <property type="match status" value="1"/>
</dbReference>
<dbReference type="PANTHER" id="PTHR31296">
    <property type="entry name" value="UPF0565 PROTEIN C2ORF69"/>
    <property type="match status" value="1"/>
</dbReference>
<dbReference type="Pfam" id="PF10561">
    <property type="entry name" value="C2orf69"/>
    <property type="match status" value="2"/>
</dbReference>
<proteinExistence type="evidence at transcript level"/>
<keyword id="KW-0249">Electron transport</keyword>
<keyword id="KW-0496">Mitochondrion</keyword>
<keyword id="KW-1185">Reference proteome</keyword>
<keyword id="KW-0679">Respiratory chain</keyword>
<keyword id="KW-0809">Transit peptide</keyword>
<keyword id="KW-0813">Transport</keyword>
<organism>
    <name type="scientific">Danio rerio</name>
    <name type="common">Zebrafish</name>
    <name type="synonym">Brachydanio rerio</name>
    <dbReference type="NCBI Taxonomy" id="7955"/>
    <lineage>
        <taxon>Eukaryota</taxon>
        <taxon>Metazoa</taxon>
        <taxon>Chordata</taxon>
        <taxon>Craniata</taxon>
        <taxon>Vertebrata</taxon>
        <taxon>Euteleostomi</taxon>
        <taxon>Actinopterygii</taxon>
        <taxon>Neopterygii</taxon>
        <taxon>Teleostei</taxon>
        <taxon>Ostariophysi</taxon>
        <taxon>Cypriniformes</taxon>
        <taxon>Danionidae</taxon>
        <taxon>Danioninae</taxon>
        <taxon>Danio</taxon>
    </lineage>
</organism>
<protein>
    <recommendedName>
        <fullName>Mitochondrial protein C2orf69 homolog</fullName>
    </recommendedName>
</protein>
<feature type="transit peptide" description="Mitochondrion" evidence="2">
    <location>
        <begin position="1"/>
        <end position="35"/>
    </location>
</feature>
<feature type="chain" id="PRO_0000329090" description="Mitochondrial protein C2orf69 homolog">
    <location>
        <begin position="36"/>
        <end position="341"/>
    </location>
</feature>
<gene>
    <name type="ORF">zgc:153521</name>
</gene>
<comment type="function">
    <text evidence="1">May play a role in the respiratory chain.</text>
</comment>
<comment type="subcellular location">
    <subcellularLocation>
        <location evidence="1">Mitochondrion matrix</location>
    </subcellularLocation>
</comment>
<comment type="similarity">
    <text evidence="3">Belongs to the C2orf69 family.</text>
</comment>
<accession>A0JMH2</accession>